<sequence length="262" mass="27653">MVAMLFYVDTLPDTGAVAVVDGDEGFHAATVRRIRPGEQLVLGDGVGRLARCVVEQAGRGGLRARVLRRWSVPPVRPPVTVVQALPKSERSELAIELATEAGADAFLAWQAARCVANWDGARVDKGLRRWRAVVRSAARQSRRARIPPVDGVLSTPMLVQRVREEVAAGAAVLVLHEEATERIVDIAAAQAGSLMLVVGPEGGIAPDELAALTDAGAVAVRLGPTVLRTSTAAAVALGAVGVLTSRWDASASDCEYCDVTRR</sequence>
<organism>
    <name type="scientific">Mycobacterium bovis (strain ATCC BAA-935 / AF2122/97)</name>
    <dbReference type="NCBI Taxonomy" id="233413"/>
    <lineage>
        <taxon>Bacteria</taxon>
        <taxon>Bacillati</taxon>
        <taxon>Actinomycetota</taxon>
        <taxon>Actinomycetes</taxon>
        <taxon>Mycobacteriales</taxon>
        <taxon>Mycobacteriaceae</taxon>
        <taxon>Mycobacterium</taxon>
        <taxon>Mycobacterium tuberculosis complex</taxon>
    </lineage>
</organism>
<evidence type="ECO:0000250" key="1"/>
<evidence type="ECO:0000305" key="2"/>
<dbReference type="EC" id="2.1.1.193"/>
<dbReference type="EMBL" id="LT708304">
    <property type="protein sequence ID" value="SIU01005.1"/>
    <property type="molecule type" value="Genomic_DNA"/>
</dbReference>
<dbReference type="RefSeq" id="NP_856042.1">
    <property type="nucleotide sequence ID" value="NC_002945.3"/>
</dbReference>
<dbReference type="RefSeq" id="WP_003900509.1">
    <property type="nucleotide sequence ID" value="NC_002945.4"/>
</dbReference>
<dbReference type="SMR" id="P67203"/>
<dbReference type="KEGG" id="mbo:BQ2027_MB2393C"/>
<dbReference type="PATRIC" id="fig|233413.5.peg.2630"/>
<dbReference type="Proteomes" id="UP000001419">
    <property type="component" value="Chromosome"/>
</dbReference>
<dbReference type="GO" id="GO:0005737">
    <property type="term" value="C:cytoplasm"/>
    <property type="evidence" value="ECO:0007669"/>
    <property type="project" value="UniProtKB-SubCell"/>
</dbReference>
<dbReference type="GO" id="GO:0070042">
    <property type="term" value="F:rRNA (uridine-N3-)-methyltransferase activity"/>
    <property type="evidence" value="ECO:0007669"/>
    <property type="project" value="TreeGrafter"/>
</dbReference>
<dbReference type="GO" id="GO:0070475">
    <property type="term" value="P:rRNA base methylation"/>
    <property type="evidence" value="ECO:0007669"/>
    <property type="project" value="TreeGrafter"/>
</dbReference>
<dbReference type="CDD" id="cd18084">
    <property type="entry name" value="RsmE-like"/>
    <property type="match status" value="1"/>
</dbReference>
<dbReference type="FunFam" id="3.40.1280.10:FF:000023">
    <property type="entry name" value="Ribosomal RNA small subunit methyltransferase E"/>
    <property type="match status" value="1"/>
</dbReference>
<dbReference type="Gene3D" id="3.40.1280.10">
    <property type="match status" value="1"/>
</dbReference>
<dbReference type="Gene3D" id="2.40.240.20">
    <property type="entry name" value="Hypothetical PUA domain-like, domain 1"/>
    <property type="match status" value="1"/>
</dbReference>
<dbReference type="InterPro" id="IPR029028">
    <property type="entry name" value="Alpha/beta_knot_MTases"/>
</dbReference>
<dbReference type="InterPro" id="IPR015947">
    <property type="entry name" value="PUA-like_sf"/>
</dbReference>
<dbReference type="InterPro" id="IPR006700">
    <property type="entry name" value="RsmE"/>
</dbReference>
<dbReference type="InterPro" id="IPR046886">
    <property type="entry name" value="RsmE_MTase_dom"/>
</dbReference>
<dbReference type="InterPro" id="IPR046887">
    <property type="entry name" value="RsmE_PUA-like"/>
</dbReference>
<dbReference type="InterPro" id="IPR029026">
    <property type="entry name" value="tRNA_m1G_MTases_N"/>
</dbReference>
<dbReference type="NCBIfam" id="NF008693">
    <property type="entry name" value="PRK11713.2-3"/>
    <property type="match status" value="1"/>
</dbReference>
<dbReference type="NCBIfam" id="TIGR00046">
    <property type="entry name" value="RsmE family RNA methyltransferase"/>
    <property type="match status" value="1"/>
</dbReference>
<dbReference type="PANTHER" id="PTHR30027:SF3">
    <property type="entry name" value="16S RRNA (URACIL(1498)-N(3))-METHYLTRANSFERASE"/>
    <property type="match status" value="1"/>
</dbReference>
<dbReference type="PANTHER" id="PTHR30027">
    <property type="entry name" value="RIBOSOMAL RNA SMALL SUBUNIT METHYLTRANSFERASE E"/>
    <property type="match status" value="1"/>
</dbReference>
<dbReference type="Pfam" id="PF04452">
    <property type="entry name" value="Methyltrans_RNA"/>
    <property type="match status" value="1"/>
</dbReference>
<dbReference type="Pfam" id="PF20260">
    <property type="entry name" value="PUA_4"/>
    <property type="match status" value="1"/>
</dbReference>
<dbReference type="PIRSF" id="PIRSF015601">
    <property type="entry name" value="MTase_slr0722"/>
    <property type="match status" value="1"/>
</dbReference>
<dbReference type="SUPFAM" id="SSF75217">
    <property type="entry name" value="alpha/beta knot"/>
    <property type="match status" value="1"/>
</dbReference>
<dbReference type="SUPFAM" id="SSF88697">
    <property type="entry name" value="PUA domain-like"/>
    <property type="match status" value="1"/>
</dbReference>
<name>RSME_MYCBO</name>
<comment type="function">
    <text evidence="1">Specifically methylates the N3 position of the uracil ring of uridine 1498 (m3U1498) in 16S rRNA. Acts on the fully assembled 30S ribosomal subunit (By similarity).</text>
</comment>
<comment type="catalytic activity">
    <reaction>
        <text>uridine(1498) in 16S rRNA + S-adenosyl-L-methionine = N(3)-methyluridine(1498) in 16S rRNA + S-adenosyl-L-homocysteine + H(+)</text>
        <dbReference type="Rhea" id="RHEA:42920"/>
        <dbReference type="Rhea" id="RHEA-COMP:10283"/>
        <dbReference type="Rhea" id="RHEA-COMP:10284"/>
        <dbReference type="ChEBI" id="CHEBI:15378"/>
        <dbReference type="ChEBI" id="CHEBI:57856"/>
        <dbReference type="ChEBI" id="CHEBI:59789"/>
        <dbReference type="ChEBI" id="CHEBI:65315"/>
        <dbReference type="ChEBI" id="CHEBI:74502"/>
        <dbReference type="EC" id="2.1.1.193"/>
    </reaction>
</comment>
<comment type="subcellular location">
    <subcellularLocation>
        <location evidence="1">Cytoplasm</location>
    </subcellularLocation>
</comment>
<comment type="similarity">
    <text evidence="2">Belongs to the RNA methyltransferase RsmE family.</text>
</comment>
<gene>
    <name type="primary">rsmE</name>
    <name type="ordered locus">BQ2027_MB2393C</name>
</gene>
<feature type="chain" id="PRO_0000176214" description="Ribosomal RNA small subunit methyltransferase E">
    <location>
        <begin position="1"/>
        <end position="262"/>
    </location>
</feature>
<accession>P67203</accession>
<accession>A0A1R3Y1T8</accession>
<accession>O05826</accession>
<accession>X2BKW0</accession>
<reference key="1">
    <citation type="journal article" date="2003" name="Proc. Natl. Acad. Sci. U.S.A.">
        <title>The complete genome sequence of Mycobacterium bovis.</title>
        <authorList>
            <person name="Garnier T."/>
            <person name="Eiglmeier K."/>
            <person name="Camus J.-C."/>
            <person name="Medina N."/>
            <person name="Mansoor H."/>
            <person name="Pryor M."/>
            <person name="Duthoy S."/>
            <person name="Grondin S."/>
            <person name="Lacroix C."/>
            <person name="Monsempe C."/>
            <person name="Simon S."/>
            <person name="Harris B."/>
            <person name="Atkin R."/>
            <person name="Doggett J."/>
            <person name="Mayes R."/>
            <person name="Keating L."/>
            <person name="Wheeler P.R."/>
            <person name="Parkhill J."/>
            <person name="Barrell B.G."/>
            <person name="Cole S.T."/>
            <person name="Gordon S.V."/>
            <person name="Hewinson R.G."/>
        </authorList>
    </citation>
    <scope>NUCLEOTIDE SEQUENCE [LARGE SCALE GENOMIC DNA]</scope>
    <source>
        <strain>ATCC BAA-935 / AF2122/97</strain>
    </source>
</reference>
<reference key="2">
    <citation type="journal article" date="2017" name="Genome Announc.">
        <title>Updated reference genome sequence and annotation of Mycobacterium bovis AF2122/97.</title>
        <authorList>
            <person name="Malone K.M."/>
            <person name="Farrell D."/>
            <person name="Stuber T.P."/>
            <person name="Schubert O.T."/>
            <person name="Aebersold R."/>
            <person name="Robbe-Austerman S."/>
            <person name="Gordon S.V."/>
        </authorList>
    </citation>
    <scope>NUCLEOTIDE SEQUENCE [LARGE SCALE GENOMIC DNA]</scope>
    <scope>GENOME REANNOTATION</scope>
    <source>
        <strain>ATCC BAA-935 / AF2122/97</strain>
    </source>
</reference>
<protein>
    <recommendedName>
        <fullName>Ribosomal RNA small subunit methyltransferase E</fullName>
        <ecNumber>2.1.1.193</ecNumber>
    </recommendedName>
    <alternativeName>
        <fullName>16S rRNA m3U1498 methyltransferase</fullName>
    </alternativeName>
</protein>
<keyword id="KW-0963">Cytoplasm</keyword>
<keyword id="KW-0489">Methyltransferase</keyword>
<keyword id="KW-1185">Reference proteome</keyword>
<keyword id="KW-0698">rRNA processing</keyword>
<keyword id="KW-0949">S-adenosyl-L-methionine</keyword>
<keyword id="KW-0808">Transferase</keyword>
<proteinExistence type="inferred from homology"/>